<gene>
    <name evidence="1" type="primary">ureB</name>
    <name type="ordered locus">Avi_3482</name>
</gene>
<accession>B9JR84</accession>
<proteinExistence type="inferred from homology"/>
<protein>
    <recommendedName>
        <fullName evidence="1">Urease subunit beta</fullName>
        <ecNumber evidence="1">3.5.1.5</ecNumber>
    </recommendedName>
    <alternativeName>
        <fullName evidence="1">Urea amidohydrolase subunit beta</fullName>
    </alternativeName>
</protein>
<keyword id="KW-0963">Cytoplasm</keyword>
<keyword id="KW-0378">Hydrolase</keyword>
<keyword id="KW-1185">Reference proteome</keyword>
<dbReference type="EC" id="3.5.1.5" evidence="1"/>
<dbReference type="EMBL" id="CP000633">
    <property type="protein sequence ID" value="ACM37495.1"/>
    <property type="molecule type" value="Genomic_DNA"/>
</dbReference>
<dbReference type="RefSeq" id="WP_015916908.1">
    <property type="nucleotide sequence ID" value="NC_011989.1"/>
</dbReference>
<dbReference type="SMR" id="B9JR84"/>
<dbReference type="STRING" id="311402.Avi_3482"/>
<dbReference type="KEGG" id="avi:Avi_3482"/>
<dbReference type="eggNOG" id="COG0832">
    <property type="taxonomic scope" value="Bacteria"/>
</dbReference>
<dbReference type="HOGENOM" id="CLU_129707_1_1_5"/>
<dbReference type="UniPathway" id="UPA00258">
    <property type="reaction ID" value="UER00370"/>
</dbReference>
<dbReference type="Proteomes" id="UP000001596">
    <property type="component" value="Chromosome 1"/>
</dbReference>
<dbReference type="GO" id="GO:0035550">
    <property type="term" value="C:urease complex"/>
    <property type="evidence" value="ECO:0007669"/>
    <property type="project" value="InterPro"/>
</dbReference>
<dbReference type="GO" id="GO:0009039">
    <property type="term" value="F:urease activity"/>
    <property type="evidence" value="ECO:0007669"/>
    <property type="project" value="UniProtKB-UniRule"/>
</dbReference>
<dbReference type="GO" id="GO:0043419">
    <property type="term" value="P:urea catabolic process"/>
    <property type="evidence" value="ECO:0007669"/>
    <property type="project" value="UniProtKB-UniRule"/>
</dbReference>
<dbReference type="CDD" id="cd00407">
    <property type="entry name" value="Urease_beta"/>
    <property type="match status" value="1"/>
</dbReference>
<dbReference type="FunFam" id="2.10.150.10:FF:000001">
    <property type="entry name" value="Urease subunit beta"/>
    <property type="match status" value="1"/>
</dbReference>
<dbReference type="Gene3D" id="2.10.150.10">
    <property type="entry name" value="Urease, beta subunit"/>
    <property type="match status" value="1"/>
</dbReference>
<dbReference type="HAMAP" id="MF_01954">
    <property type="entry name" value="Urease_beta"/>
    <property type="match status" value="1"/>
</dbReference>
<dbReference type="InterPro" id="IPR002019">
    <property type="entry name" value="Urease_beta-like"/>
</dbReference>
<dbReference type="InterPro" id="IPR036461">
    <property type="entry name" value="Urease_betasu_sf"/>
</dbReference>
<dbReference type="InterPro" id="IPR050069">
    <property type="entry name" value="Urease_subunit"/>
</dbReference>
<dbReference type="NCBIfam" id="NF009682">
    <property type="entry name" value="PRK13203.1"/>
    <property type="match status" value="1"/>
</dbReference>
<dbReference type="NCBIfam" id="TIGR00192">
    <property type="entry name" value="urease_beta"/>
    <property type="match status" value="1"/>
</dbReference>
<dbReference type="PANTHER" id="PTHR33569">
    <property type="entry name" value="UREASE"/>
    <property type="match status" value="1"/>
</dbReference>
<dbReference type="PANTHER" id="PTHR33569:SF1">
    <property type="entry name" value="UREASE"/>
    <property type="match status" value="1"/>
</dbReference>
<dbReference type="Pfam" id="PF00699">
    <property type="entry name" value="Urease_beta"/>
    <property type="match status" value="1"/>
</dbReference>
<dbReference type="SUPFAM" id="SSF51278">
    <property type="entry name" value="Urease, beta-subunit"/>
    <property type="match status" value="1"/>
</dbReference>
<sequence length="101" mass="11027">MKPGEIIAASGEIELNAGQPTVTIEVSNTGDRPVQVGSHYHFFETNAGLSFDRDKVRGMRLDIPAGTAVRFEPGQTREVTLIPLAGKREVYGFRQKVMGPL</sequence>
<evidence type="ECO:0000255" key="1">
    <source>
        <dbReference type="HAMAP-Rule" id="MF_01954"/>
    </source>
</evidence>
<comment type="catalytic activity">
    <reaction evidence="1">
        <text>urea + 2 H2O + H(+) = hydrogencarbonate + 2 NH4(+)</text>
        <dbReference type="Rhea" id="RHEA:20557"/>
        <dbReference type="ChEBI" id="CHEBI:15377"/>
        <dbReference type="ChEBI" id="CHEBI:15378"/>
        <dbReference type="ChEBI" id="CHEBI:16199"/>
        <dbReference type="ChEBI" id="CHEBI:17544"/>
        <dbReference type="ChEBI" id="CHEBI:28938"/>
        <dbReference type="EC" id="3.5.1.5"/>
    </reaction>
</comment>
<comment type="pathway">
    <text evidence="1">Nitrogen metabolism; urea degradation; CO(2) and NH(3) from urea (urease route): step 1/1.</text>
</comment>
<comment type="subunit">
    <text evidence="1">Heterotrimer of UreA (gamma), UreB (beta) and UreC (alpha) subunits. Three heterotrimers associate to form the active enzyme.</text>
</comment>
<comment type="subcellular location">
    <subcellularLocation>
        <location evidence="1">Cytoplasm</location>
    </subcellularLocation>
</comment>
<comment type="similarity">
    <text evidence="1">Belongs to the urease beta subunit family.</text>
</comment>
<feature type="chain" id="PRO_1000188910" description="Urease subunit beta">
    <location>
        <begin position="1"/>
        <end position="101"/>
    </location>
</feature>
<organism>
    <name type="scientific">Allorhizobium ampelinum (strain ATCC BAA-846 / DSM 112012 / S4)</name>
    <name type="common">Agrobacterium vitis (strain S4)</name>
    <dbReference type="NCBI Taxonomy" id="311402"/>
    <lineage>
        <taxon>Bacteria</taxon>
        <taxon>Pseudomonadati</taxon>
        <taxon>Pseudomonadota</taxon>
        <taxon>Alphaproteobacteria</taxon>
        <taxon>Hyphomicrobiales</taxon>
        <taxon>Rhizobiaceae</taxon>
        <taxon>Rhizobium/Agrobacterium group</taxon>
        <taxon>Allorhizobium</taxon>
        <taxon>Allorhizobium ampelinum</taxon>
    </lineage>
</organism>
<name>URE2_ALLAM</name>
<reference key="1">
    <citation type="journal article" date="2009" name="J. Bacteriol.">
        <title>Genome sequences of three Agrobacterium biovars help elucidate the evolution of multichromosome genomes in bacteria.</title>
        <authorList>
            <person name="Slater S.C."/>
            <person name="Goldman B.S."/>
            <person name="Goodner B."/>
            <person name="Setubal J.C."/>
            <person name="Farrand S.K."/>
            <person name="Nester E.W."/>
            <person name="Burr T.J."/>
            <person name="Banta L."/>
            <person name="Dickerman A.W."/>
            <person name="Paulsen I."/>
            <person name="Otten L."/>
            <person name="Suen G."/>
            <person name="Welch R."/>
            <person name="Almeida N.F."/>
            <person name="Arnold F."/>
            <person name="Burton O.T."/>
            <person name="Du Z."/>
            <person name="Ewing A."/>
            <person name="Godsy E."/>
            <person name="Heisel S."/>
            <person name="Houmiel K.L."/>
            <person name="Jhaveri J."/>
            <person name="Lu J."/>
            <person name="Miller N.M."/>
            <person name="Norton S."/>
            <person name="Chen Q."/>
            <person name="Phoolcharoen W."/>
            <person name="Ohlin V."/>
            <person name="Ondrusek D."/>
            <person name="Pride N."/>
            <person name="Stricklin S.L."/>
            <person name="Sun J."/>
            <person name="Wheeler C."/>
            <person name="Wilson L."/>
            <person name="Zhu H."/>
            <person name="Wood D.W."/>
        </authorList>
    </citation>
    <scope>NUCLEOTIDE SEQUENCE [LARGE SCALE GENOMIC DNA]</scope>
    <source>
        <strain>ATCC BAA-846 / DSM 112012 / S4</strain>
    </source>
</reference>